<name>GLNE_ECO45</name>
<sequence length="946" mass="108317">MKPLSSPLQQYWQTVVERLPEPLAEESLSAQAKSVLTFSDFVQDSVIAHPEWLTELESQPPQADEWQHYAAWLQEALSNVSDEAGLMRELRLFRRRIMVRIAWAQTLALVTEESILQQLSHLAETLIVAARDWLYDACCREWGTPCNAQGEAQPLLILGMGKLGGGELNFSSDIDLIFAWPEHGCTQGGRRELDNAQFFTRMGQRLIKVLDQPTQDGFVYRVDMRLRPFGESGPLVLSFAALEDYYQEQGRDWERYAMVKARIMGDSDGVYANELRAMLRPFVFRRYIDFSVIQSLRNMKGMIAREVRRRGLTDNIKLGAGGIREIEFIVQVFQLIRGGREPSLQSRALLPTLSAIAALHLLSENDAEQLRVAYLFLRRLENLLQSINDEQTQTLPSDELTRARLAWAMDFADWPQLTGVLTAHMANVRRVFNELIGDDESETQEESLSEQWRELWQDALQEDDTTPVLAHLSEDERKQVLMLIADFRKELDKRTIGPRGRQVLDHLMPHLLSDVCAREDAAVTLSRITALLVGIVTRTTYLELLSEFPAALKHLISLCAASPMIASQLARYPLLLDELLDPNTLYQPTATDAYRDELRQYLLRVPEDDEEQQLEALRQFKQAQLLRIAAADIAGTLPVMKVSDHLTWLAEAMIDAVVQQAWVQMVARYGKPNHLNEREGRGFAVVGYGKLGGWELGYSSDLDLIFLHDCPMDAMTDGEREIDGRQFYLRLAQRIMHLFSTRTSSGILYEVDARLRPSGAAGMLVTSAEAFADYQKNEAWTWEHQALVRARVVYGDPQLTAHFDAVRREIMTLPREGKTLQTEVREMREKMRAHLGNKHRDRFDIKADEGGITDIEFITQYLVLRYAHEKPKLTRWSDNVRILELLAQNDIMEEQEAMALTRAYTTLRDELHHLALQELPGHVSEDCFTAERELVRASWQKWLVEE</sequence>
<organism>
    <name type="scientific">Escherichia coli O45:K1 (strain S88 / ExPEC)</name>
    <dbReference type="NCBI Taxonomy" id="585035"/>
    <lineage>
        <taxon>Bacteria</taxon>
        <taxon>Pseudomonadati</taxon>
        <taxon>Pseudomonadota</taxon>
        <taxon>Gammaproteobacteria</taxon>
        <taxon>Enterobacterales</taxon>
        <taxon>Enterobacteriaceae</taxon>
        <taxon>Escherichia</taxon>
    </lineage>
</organism>
<feature type="chain" id="PRO_1000133897" description="Bifunctional glutamine synthetase adenylyltransferase/adenylyl-removing enzyme">
    <location>
        <begin position="1"/>
        <end position="946"/>
    </location>
</feature>
<feature type="region of interest" description="Adenylyl removase" evidence="1">
    <location>
        <begin position="1"/>
        <end position="440"/>
    </location>
</feature>
<feature type="region of interest" description="Adenylyl transferase" evidence="1">
    <location>
        <begin position="449"/>
        <end position="946"/>
    </location>
</feature>
<gene>
    <name evidence="1" type="primary">glnE</name>
    <name type="ordered locus">ECS88_3450</name>
</gene>
<keyword id="KW-0067">ATP-binding</keyword>
<keyword id="KW-0460">Magnesium</keyword>
<keyword id="KW-0511">Multifunctional enzyme</keyword>
<keyword id="KW-0547">Nucleotide-binding</keyword>
<keyword id="KW-0548">Nucleotidyltransferase</keyword>
<keyword id="KW-1185">Reference proteome</keyword>
<keyword id="KW-0808">Transferase</keyword>
<evidence type="ECO:0000255" key="1">
    <source>
        <dbReference type="HAMAP-Rule" id="MF_00802"/>
    </source>
</evidence>
<protein>
    <recommendedName>
        <fullName evidence="1">Bifunctional glutamine synthetase adenylyltransferase/adenylyl-removing enzyme</fullName>
    </recommendedName>
    <alternativeName>
        <fullName evidence="1">ATP:glutamine synthetase adenylyltransferase</fullName>
    </alternativeName>
    <alternativeName>
        <fullName evidence="1">ATase</fullName>
    </alternativeName>
    <domain>
        <recommendedName>
            <fullName evidence="1">Glutamine synthetase adenylyl-L-tyrosine phosphorylase</fullName>
            <ecNumber evidence="1">2.7.7.89</ecNumber>
        </recommendedName>
        <alternativeName>
            <fullName evidence="1">Adenylyl removase</fullName>
            <shortName evidence="1">AR</shortName>
            <shortName evidence="1">AT-N</shortName>
        </alternativeName>
    </domain>
    <domain>
        <recommendedName>
            <fullName evidence="1">Glutamine synthetase adenylyl transferase</fullName>
            <ecNumber evidence="1">2.7.7.42</ecNumber>
        </recommendedName>
        <alternativeName>
            <fullName evidence="1">Adenylyl transferase</fullName>
            <shortName evidence="1">AT</shortName>
            <shortName evidence="1">AT-C</shortName>
        </alternativeName>
    </domain>
</protein>
<proteinExistence type="inferred from homology"/>
<dbReference type="EC" id="2.7.7.89" evidence="1"/>
<dbReference type="EC" id="2.7.7.42" evidence="1"/>
<dbReference type="EMBL" id="CU928161">
    <property type="protein sequence ID" value="CAR04679.1"/>
    <property type="molecule type" value="Genomic_DNA"/>
</dbReference>
<dbReference type="RefSeq" id="WP_001331677.1">
    <property type="nucleotide sequence ID" value="NC_011742.1"/>
</dbReference>
<dbReference type="SMR" id="B7MAC9"/>
<dbReference type="KEGG" id="ecz:ECS88_3450"/>
<dbReference type="HOGENOM" id="CLU_006233_0_1_6"/>
<dbReference type="Proteomes" id="UP000000747">
    <property type="component" value="Chromosome"/>
</dbReference>
<dbReference type="GO" id="GO:0005829">
    <property type="term" value="C:cytosol"/>
    <property type="evidence" value="ECO:0007669"/>
    <property type="project" value="TreeGrafter"/>
</dbReference>
<dbReference type="GO" id="GO:0008882">
    <property type="term" value="F:[glutamate-ammonia-ligase] adenylyltransferase activity"/>
    <property type="evidence" value="ECO:0007669"/>
    <property type="project" value="UniProtKB-UniRule"/>
</dbReference>
<dbReference type="GO" id="GO:0047388">
    <property type="term" value="F:[glutamine synthetase]-adenylyl-L-tyrosine phosphorylase activity"/>
    <property type="evidence" value="ECO:0007669"/>
    <property type="project" value="UniProtKB-EC"/>
</dbReference>
<dbReference type="GO" id="GO:0005524">
    <property type="term" value="F:ATP binding"/>
    <property type="evidence" value="ECO:0007669"/>
    <property type="project" value="UniProtKB-UniRule"/>
</dbReference>
<dbReference type="GO" id="GO:0000287">
    <property type="term" value="F:magnesium ion binding"/>
    <property type="evidence" value="ECO:0007669"/>
    <property type="project" value="UniProtKB-UniRule"/>
</dbReference>
<dbReference type="GO" id="GO:0000820">
    <property type="term" value="P:regulation of glutamine family amino acid metabolic process"/>
    <property type="evidence" value="ECO:0007669"/>
    <property type="project" value="UniProtKB-UniRule"/>
</dbReference>
<dbReference type="CDD" id="cd05401">
    <property type="entry name" value="NT_GlnE_GlnD_like"/>
    <property type="match status" value="2"/>
</dbReference>
<dbReference type="FunFam" id="1.10.4050.10:FF:000001">
    <property type="entry name" value="Bifunctional glutamine synthetase adenylyltransferase/adenylyl-removing enzyme"/>
    <property type="match status" value="1"/>
</dbReference>
<dbReference type="FunFam" id="1.20.120.1510:FF:000001">
    <property type="entry name" value="Bifunctional glutamine synthetase adenylyltransferase/adenylyl-removing enzyme"/>
    <property type="match status" value="1"/>
</dbReference>
<dbReference type="FunFam" id="1.20.120.330:FF:000005">
    <property type="entry name" value="Bifunctional glutamine synthetase adenylyltransferase/adenylyl-removing enzyme"/>
    <property type="match status" value="1"/>
</dbReference>
<dbReference type="FunFam" id="1.20.120.330:FF:000008">
    <property type="entry name" value="Bifunctional glutamine synthetase adenylyltransferase/adenylyl-removing enzyme"/>
    <property type="match status" value="1"/>
</dbReference>
<dbReference type="FunFam" id="3.30.460.10:FF:000009">
    <property type="entry name" value="Bifunctional glutamine synthetase adenylyltransferase/adenylyl-removing enzyme"/>
    <property type="match status" value="1"/>
</dbReference>
<dbReference type="FunFam" id="3.30.460.10:FF:000014">
    <property type="entry name" value="Bifunctional glutamine synthetase adenylyltransferase/adenylyl-removing enzyme"/>
    <property type="match status" value="1"/>
</dbReference>
<dbReference type="Gene3D" id="1.20.120.1510">
    <property type="match status" value="1"/>
</dbReference>
<dbReference type="Gene3D" id="3.30.460.10">
    <property type="entry name" value="Beta Polymerase, domain 2"/>
    <property type="match status" value="2"/>
</dbReference>
<dbReference type="Gene3D" id="1.10.4050.10">
    <property type="entry name" value="Glutamine synthase adenylyltransferase GlnE"/>
    <property type="match status" value="1"/>
</dbReference>
<dbReference type="Gene3D" id="1.20.120.330">
    <property type="entry name" value="Nucleotidyltransferases domain 2"/>
    <property type="match status" value="2"/>
</dbReference>
<dbReference type="HAMAP" id="MF_00802">
    <property type="entry name" value="GlnE"/>
    <property type="match status" value="1"/>
</dbReference>
<dbReference type="InterPro" id="IPR023057">
    <property type="entry name" value="GlnE"/>
</dbReference>
<dbReference type="InterPro" id="IPR005190">
    <property type="entry name" value="GlnE_rpt_dom"/>
</dbReference>
<dbReference type="InterPro" id="IPR043519">
    <property type="entry name" value="NT_sf"/>
</dbReference>
<dbReference type="InterPro" id="IPR013546">
    <property type="entry name" value="PII_UdlTrfase/GS_AdlTrfase"/>
</dbReference>
<dbReference type="NCBIfam" id="NF008292">
    <property type="entry name" value="PRK11072.1"/>
    <property type="match status" value="1"/>
</dbReference>
<dbReference type="PANTHER" id="PTHR30621:SF0">
    <property type="entry name" value="BIFUNCTIONAL GLUTAMINE SYNTHETASE ADENYLYLTRANSFERASE_ADENYLYL-REMOVING ENZYME"/>
    <property type="match status" value="1"/>
</dbReference>
<dbReference type="PANTHER" id="PTHR30621">
    <property type="entry name" value="GLUTAMINE SYNTHETASE ADENYLYLTRANSFERASE"/>
    <property type="match status" value="1"/>
</dbReference>
<dbReference type="Pfam" id="PF08335">
    <property type="entry name" value="GlnD_UR_UTase"/>
    <property type="match status" value="2"/>
</dbReference>
<dbReference type="Pfam" id="PF03710">
    <property type="entry name" value="GlnE"/>
    <property type="match status" value="2"/>
</dbReference>
<dbReference type="SUPFAM" id="SSF81301">
    <property type="entry name" value="Nucleotidyltransferase"/>
    <property type="match status" value="2"/>
</dbReference>
<dbReference type="SUPFAM" id="SSF81593">
    <property type="entry name" value="Nucleotidyltransferase substrate binding subunit/domain"/>
    <property type="match status" value="2"/>
</dbReference>
<accession>B7MAC9</accession>
<comment type="function">
    <text evidence="1">Involved in the regulation of glutamine synthetase GlnA, a key enzyme in the process to assimilate ammonia. When cellular nitrogen levels are high, the C-terminal adenylyl transferase (AT) inactivates GlnA by covalent transfer of an adenylyl group from ATP to specific tyrosine residue of GlnA, thus reducing its activity. Conversely, when nitrogen levels are low, the N-terminal adenylyl removase (AR) activates GlnA by removing the adenylyl group by phosphorolysis, increasing its activity. The regulatory region of GlnE binds the signal transduction protein PII (GlnB) which indicates the nitrogen status of the cell.</text>
</comment>
<comment type="catalytic activity">
    <reaction evidence="1">
        <text>[glutamine synthetase]-O(4)-(5'-adenylyl)-L-tyrosine + phosphate = [glutamine synthetase]-L-tyrosine + ADP</text>
        <dbReference type="Rhea" id="RHEA:43716"/>
        <dbReference type="Rhea" id="RHEA-COMP:10660"/>
        <dbReference type="Rhea" id="RHEA-COMP:10661"/>
        <dbReference type="ChEBI" id="CHEBI:43474"/>
        <dbReference type="ChEBI" id="CHEBI:46858"/>
        <dbReference type="ChEBI" id="CHEBI:83624"/>
        <dbReference type="ChEBI" id="CHEBI:456216"/>
        <dbReference type="EC" id="2.7.7.89"/>
    </reaction>
</comment>
<comment type="catalytic activity">
    <reaction evidence="1">
        <text>[glutamine synthetase]-L-tyrosine + ATP = [glutamine synthetase]-O(4)-(5'-adenylyl)-L-tyrosine + diphosphate</text>
        <dbReference type="Rhea" id="RHEA:18589"/>
        <dbReference type="Rhea" id="RHEA-COMP:10660"/>
        <dbReference type="Rhea" id="RHEA-COMP:10661"/>
        <dbReference type="ChEBI" id="CHEBI:30616"/>
        <dbReference type="ChEBI" id="CHEBI:33019"/>
        <dbReference type="ChEBI" id="CHEBI:46858"/>
        <dbReference type="ChEBI" id="CHEBI:83624"/>
        <dbReference type="EC" id="2.7.7.42"/>
    </reaction>
</comment>
<comment type="cofactor">
    <cofactor evidence="1">
        <name>Mg(2+)</name>
        <dbReference type="ChEBI" id="CHEBI:18420"/>
    </cofactor>
</comment>
<comment type="similarity">
    <text evidence="1">Belongs to the GlnE family.</text>
</comment>
<reference key="1">
    <citation type="journal article" date="2009" name="PLoS Genet.">
        <title>Organised genome dynamics in the Escherichia coli species results in highly diverse adaptive paths.</title>
        <authorList>
            <person name="Touchon M."/>
            <person name="Hoede C."/>
            <person name="Tenaillon O."/>
            <person name="Barbe V."/>
            <person name="Baeriswyl S."/>
            <person name="Bidet P."/>
            <person name="Bingen E."/>
            <person name="Bonacorsi S."/>
            <person name="Bouchier C."/>
            <person name="Bouvet O."/>
            <person name="Calteau A."/>
            <person name="Chiapello H."/>
            <person name="Clermont O."/>
            <person name="Cruveiller S."/>
            <person name="Danchin A."/>
            <person name="Diard M."/>
            <person name="Dossat C."/>
            <person name="Karoui M.E."/>
            <person name="Frapy E."/>
            <person name="Garry L."/>
            <person name="Ghigo J.M."/>
            <person name="Gilles A.M."/>
            <person name="Johnson J."/>
            <person name="Le Bouguenec C."/>
            <person name="Lescat M."/>
            <person name="Mangenot S."/>
            <person name="Martinez-Jehanne V."/>
            <person name="Matic I."/>
            <person name="Nassif X."/>
            <person name="Oztas S."/>
            <person name="Petit M.A."/>
            <person name="Pichon C."/>
            <person name="Rouy Z."/>
            <person name="Ruf C.S."/>
            <person name="Schneider D."/>
            <person name="Tourret J."/>
            <person name="Vacherie B."/>
            <person name="Vallenet D."/>
            <person name="Medigue C."/>
            <person name="Rocha E.P.C."/>
            <person name="Denamur E."/>
        </authorList>
    </citation>
    <scope>NUCLEOTIDE SEQUENCE [LARGE SCALE GENOMIC DNA]</scope>
    <source>
        <strain>S88 / ExPEC</strain>
    </source>
</reference>